<gene>
    <name evidence="9" type="primary">Sems</name>
    <name evidence="9" type="ORF">CG10586</name>
</gene>
<organism evidence="10">
    <name type="scientific">Drosophila melanogaster</name>
    <name type="common">Fruit fly</name>
    <dbReference type="NCBI Taxonomy" id="7227"/>
    <lineage>
        <taxon>Eukaryota</taxon>
        <taxon>Metazoa</taxon>
        <taxon>Ecdysozoa</taxon>
        <taxon>Arthropoda</taxon>
        <taxon>Hexapoda</taxon>
        <taxon>Insecta</taxon>
        <taxon>Pterygota</taxon>
        <taxon>Neoptera</taxon>
        <taxon>Endopterygota</taxon>
        <taxon>Diptera</taxon>
        <taxon>Brachycera</taxon>
        <taxon>Muscomorpha</taxon>
        <taxon>Ephydroidea</taxon>
        <taxon>Drosophilidae</taxon>
        <taxon>Drosophila</taxon>
        <taxon>Sophophora</taxon>
    </lineage>
</organism>
<feature type="signal peptide" evidence="1">
    <location>
        <begin position="1"/>
        <end position="19"/>
    </location>
</feature>
<feature type="propeptide" id="PRO_0000436916" description="Activation peptide" evidence="7">
    <location>
        <begin position="20"/>
        <end status="unknown"/>
    </location>
</feature>
<feature type="chain" id="PRO_5004338390" description="Seminase" evidence="7">
    <location>
        <begin status="unknown"/>
        <end position="275"/>
    </location>
</feature>
<feature type="domain" description="Peptidase S1" evidence="2">
    <location>
        <begin position="44"/>
        <end position="268"/>
    </location>
</feature>
<feature type="active site" description="Charge relay system" evidence="2">
    <location>
        <position position="85"/>
    </location>
</feature>
<feature type="active site" description="Charge relay system" evidence="2">
    <location>
        <position position="131"/>
    </location>
</feature>
<feature type="active site" description="Charge relay system" evidence="2">
    <location>
        <position position="224"/>
    </location>
</feature>
<feature type="glycosylation site" description="N-linked (GlcNAc...) asparagine" evidence="3">
    <location>
        <position position="23"/>
    </location>
</feature>
<feature type="disulfide bond" evidence="2">
    <location>
        <begin position="70"/>
        <end position="86"/>
    </location>
</feature>
<feature type="disulfide bond" evidence="2">
    <location>
        <begin position="194"/>
        <end position="210"/>
    </location>
</feature>
<feature type="disulfide bond" evidence="2">
    <location>
        <begin position="220"/>
        <end position="244"/>
    </location>
</feature>
<sequence>MKRLLFLFLLAGILINNHALQHNETIDLKKLAKIVLPPAYQTRVIGGRVTTNAKLGGYLVAMRYFNNFICGGTLIHELIVLTAAHCFEDRAEKEAWSVDGGISRLSEKGIRRQVKRFIKSAQFKMVTMNMDVAVVLLNRPMVGKNIGTLSLCSTALTPGQTMDVSGWGMTNPDDEGPGHMLRTVSVPVIEKRICREAYRESVSISDSMFCASVLGKKDACTYDSGGPLVYEKQVCGIVSFGIGCASRRYPGVYTDVHYVKPFIVKGIKALLSRSR</sequence>
<reference evidence="10" key="1">
    <citation type="journal article" date="2000" name="Science">
        <title>The genome sequence of Drosophila melanogaster.</title>
        <authorList>
            <person name="Adams M.D."/>
            <person name="Celniker S.E."/>
            <person name="Holt R.A."/>
            <person name="Evans C.A."/>
            <person name="Gocayne J.D."/>
            <person name="Amanatides P.G."/>
            <person name="Scherer S.E."/>
            <person name="Li P.W."/>
            <person name="Hoskins R.A."/>
            <person name="Galle R.F."/>
            <person name="George R.A."/>
            <person name="Lewis S.E."/>
            <person name="Richards S."/>
            <person name="Ashburner M."/>
            <person name="Henderson S.N."/>
            <person name="Sutton G.G."/>
            <person name="Wortman J.R."/>
            <person name="Yandell M.D."/>
            <person name="Zhang Q."/>
            <person name="Chen L.X."/>
            <person name="Brandon R.C."/>
            <person name="Rogers Y.-H.C."/>
            <person name="Blazej R.G."/>
            <person name="Champe M."/>
            <person name="Pfeiffer B.D."/>
            <person name="Wan K.H."/>
            <person name="Doyle C."/>
            <person name="Baxter E.G."/>
            <person name="Helt G."/>
            <person name="Nelson C.R."/>
            <person name="Miklos G.L.G."/>
            <person name="Abril J.F."/>
            <person name="Agbayani A."/>
            <person name="An H.-J."/>
            <person name="Andrews-Pfannkoch C."/>
            <person name="Baldwin D."/>
            <person name="Ballew R.M."/>
            <person name="Basu A."/>
            <person name="Baxendale J."/>
            <person name="Bayraktaroglu L."/>
            <person name="Beasley E.M."/>
            <person name="Beeson K.Y."/>
            <person name="Benos P.V."/>
            <person name="Berman B.P."/>
            <person name="Bhandari D."/>
            <person name="Bolshakov S."/>
            <person name="Borkova D."/>
            <person name="Botchan M.R."/>
            <person name="Bouck J."/>
            <person name="Brokstein P."/>
            <person name="Brottier P."/>
            <person name="Burtis K.C."/>
            <person name="Busam D.A."/>
            <person name="Butler H."/>
            <person name="Cadieu E."/>
            <person name="Center A."/>
            <person name="Chandra I."/>
            <person name="Cherry J.M."/>
            <person name="Cawley S."/>
            <person name="Dahlke C."/>
            <person name="Davenport L.B."/>
            <person name="Davies P."/>
            <person name="de Pablos B."/>
            <person name="Delcher A."/>
            <person name="Deng Z."/>
            <person name="Mays A.D."/>
            <person name="Dew I."/>
            <person name="Dietz S.M."/>
            <person name="Dodson K."/>
            <person name="Doup L.E."/>
            <person name="Downes M."/>
            <person name="Dugan-Rocha S."/>
            <person name="Dunkov B.C."/>
            <person name="Dunn P."/>
            <person name="Durbin K.J."/>
            <person name="Evangelista C.C."/>
            <person name="Ferraz C."/>
            <person name="Ferriera S."/>
            <person name="Fleischmann W."/>
            <person name="Fosler C."/>
            <person name="Gabrielian A.E."/>
            <person name="Garg N.S."/>
            <person name="Gelbart W.M."/>
            <person name="Glasser K."/>
            <person name="Glodek A."/>
            <person name="Gong F."/>
            <person name="Gorrell J.H."/>
            <person name="Gu Z."/>
            <person name="Guan P."/>
            <person name="Harris M."/>
            <person name="Harris N.L."/>
            <person name="Harvey D.A."/>
            <person name="Heiman T.J."/>
            <person name="Hernandez J.R."/>
            <person name="Houck J."/>
            <person name="Hostin D."/>
            <person name="Houston K.A."/>
            <person name="Howland T.J."/>
            <person name="Wei M.-H."/>
            <person name="Ibegwam C."/>
            <person name="Jalali M."/>
            <person name="Kalush F."/>
            <person name="Karpen G.H."/>
            <person name="Ke Z."/>
            <person name="Kennison J.A."/>
            <person name="Ketchum K.A."/>
            <person name="Kimmel B.E."/>
            <person name="Kodira C.D."/>
            <person name="Kraft C.L."/>
            <person name="Kravitz S."/>
            <person name="Kulp D."/>
            <person name="Lai Z."/>
            <person name="Lasko P."/>
            <person name="Lei Y."/>
            <person name="Levitsky A.A."/>
            <person name="Li J.H."/>
            <person name="Li Z."/>
            <person name="Liang Y."/>
            <person name="Lin X."/>
            <person name="Liu X."/>
            <person name="Mattei B."/>
            <person name="McIntosh T.C."/>
            <person name="McLeod M.P."/>
            <person name="McPherson D."/>
            <person name="Merkulov G."/>
            <person name="Milshina N.V."/>
            <person name="Mobarry C."/>
            <person name="Morris J."/>
            <person name="Moshrefi A."/>
            <person name="Mount S.M."/>
            <person name="Moy M."/>
            <person name="Murphy B."/>
            <person name="Murphy L."/>
            <person name="Muzny D.M."/>
            <person name="Nelson D.L."/>
            <person name="Nelson D.R."/>
            <person name="Nelson K.A."/>
            <person name="Nixon K."/>
            <person name="Nusskern D.R."/>
            <person name="Pacleb J.M."/>
            <person name="Palazzolo M."/>
            <person name="Pittman G.S."/>
            <person name="Pan S."/>
            <person name="Pollard J."/>
            <person name="Puri V."/>
            <person name="Reese M.G."/>
            <person name="Reinert K."/>
            <person name="Remington K."/>
            <person name="Saunders R.D.C."/>
            <person name="Scheeler F."/>
            <person name="Shen H."/>
            <person name="Shue B.C."/>
            <person name="Siden-Kiamos I."/>
            <person name="Simpson M."/>
            <person name="Skupski M.P."/>
            <person name="Smith T.J."/>
            <person name="Spier E."/>
            <person name="Spradling A.C."/>
            <person name="Stapleton M."/>
            <person name="Strong R."/>
            <person name="Sun E."/>
            <person name="Svirskas R."/>
            <person name="Tector C."/>
            <person name="Turner R."/>
            <person name="Venter E."/>
            <person name="Wang A.H."/>
            <person name="Wang X."/>
            <person name="Wang Z.-Y."/>
            <person name="Wassarman D.A."/>
            <person name="Weinstock G.M."/>
            <person name="Weissenbach J."/>
            <person name="Williams S.M."/>
            <person name="Woodage T."/>
            <person name="Worley K.C."/>
            <person name="Wu D."/>
            <person name="Yang S."/>
            <person name="Yao Q.A."/>
            <person name="Ye J."/>
            <person name="Yeh R.-F."/>
            <person name="Zaveri J.S."/>
            <person name="Zhan M."/>
            <person name="Zhang G."/>
            <person name="Zhao Q."/>
            <person name="Zheng L."/>
            <person name="Zheng X.H."/>
            <person name="Zhong F.N."/>
            <person name="Zhong W."/>
            <person name="Zhou X."/>
            <person name="Zhu S.C."/>
            <person name="Zhu X."/>
            <person name="Smith H.O."/>
            <person name="Gibbs R.A."/>
            <person name="Myers E.W."/>
            <person name="Rubin G.M."/>
            <person name="Venter J.C."/>
        </authorList>
    </citation>
    <scope>NUCLEOTIDE SEQUENCE [LARGE SCALE GENOMIC DNA]</scope>
    <source>
        <strain evidence="10">Berkeley</strain>
    </source>
</reference>
<reference evidence="10" key="2">
    <citation type="journal article" date="2002" name="Genome Biol.">
        <title>Annotation of the Drosophila melanogaster euchromatic genome: a systematic review.</title>
        <authorList>
            <person name="Misra S."/>
            <person name="Crosby M.A."/>
            <person name="Mungall C.J."/>
            <person name="Matthews B.B."/>
            <person name="Campbell K.S."/>
            <person name="Hradecky P."/>
            <person name="Huang Y."/>
            <person name="Kaminker J.S."/>
            <person name="Millburn G.H."/>
            <person name="Prochnik S.E."/>
            <person name="Smith C.D."/>
            <person name="Tupy J.L."/>
            <person name="Whitfield E.J."/>
            <person name="Bayraktaroglu L."/>
            <person name="Berman B.P."/>
            <person name="Bettencourt B.R."/>
            <person name="Celniker S.E."/>
            <person name="de Grey A.D.N.J."/>
            <person name="Drysdale R.A."/>
            <person name="Harris N.L."/>
            <person name="Richter J."/>
            <person name="Russo S."/>
            <person name="Schroeder A.J."/>
            <person name="Shu S.Q."/>
            <person name="Stapleton M."/>
            <person name="Yamada C."/>
            <person name="Ashburner M."/>
            <person name="Gelbart W.M."/>
            <person name="Rubin G.M."/>
            <person name="Lewis S.E."/>
        </authorList>
    </citation>
    <scope>GENOME REANNOTATION</scope>
    <source>
        <strain evidence="10">Berkeley</strain>
    </source>
</reference>
<reference evidence="8" key="3">
    <citation type="submission" date="2009-03" db="EMBL/GenBank/DDBJ databases">
        <authorList>
            <person name="Carlson J."/>
            <person name="Booth B."/>
            <person name="Frise E."/>
            <person name="Park S."/>
            <person name="Wan K."/>
            <person name="Yu C."/>
            <person name="Celniker S."/>
        </authorList>
    </citation>
    <scope>NUCLEOTIDE SEQUENCE [LARGE SCALE MRNA]</scope>
    <source>
        <strain evidence="8">Berkeley</strain>
    </source>
</reference>
<reference evidence="7" key="4">
    <citation type="journal article" date="2012" name="PLoS Genet.">
        <title>The Drosophila melanogaster seminal fluid protease 'seminase' regulates proteolytic and post-mating reproductive processes.</title>
        <authorList>
            <person name="LaFlamme B.A."/>
            <person name="Ram K.R."/>
            <person name="Wolfner M.F."/>
        </authorList>
    </citation>
    <scope>FUNCTION</scope>
    <scope>SUBCELLULAR LOCATION</scope>
    <scope>TISSUE SPECIFICITY</scope>
    <scope>CLEAVAGE</scope>
    <scope>DISRUPTION PHENOTYPE</scope>
</reference>
<reference evidence="7" key="5">
    <citation type="journal article" date="2014" name="Genetics">
        <title>A Drosophila protease cascade member, seminal metalloprotease-1, is activated stepwise by male factors and requires female factors for full activity.</title>
        <authorList>
            <person name="Laflamme B.A."/>
            <person name="Avila F.W."/>
            <person name="Michalski K."/>
            <person name="Wolfner M.F."/>
        </authorList>
    </citation>
    <scope>FUNCTION</scope>
    <scope>DISRUPTION PHENOTYPE</scope>
</reference>
<evidence type="ECO:0000255" key="1"/>
<evidence type="ECO:0000255" key="2">
    <source>
        <dbReference type="PROSITE-ProRule" id="PRU00274"/>
    </source>
</evidence>
<evidence type="ECO:0000255" key="3">
    <source>
        <dbReference type="PROSITE-ProRule" id="PRU00498"/>
    </source>
</evidence>
<evidence type="ECO:0000269" key="4">
    <source>
    </source>
</evidence>
<evidence type="ECO:0000269" key="5">
    <source>
    </source>
</evidence>
<evidence type="ECO:0000303" key="6">
    <source>
    </source>
</evidence>
<evidence type="ECO:0000305" key="7"/>
<evidence type="ECO:0000312" key="8">
    <source>
        <dbReference type="EMBL" id="ACO34939.1"/>
    </source>
</evidence>
<evidence type="ECO:0000312" key="9">
    <source>
        <dbReference type="FlyBase" id="FBgn0037036"/>
    </source>
</evidence>
<evidence type="ECO:0000312" key="10">
    <source>
        <dbReference type="Proteomes" id="UP000000803"/>
    </source>
</evidence>
<name>SEMS_DROME</name>
<proteinExistence type="evidence at protein level"/>
<comment type="function">
    <text evidence="4 5">Seminal fluid protease which is required for cleavage and probably also activation of the metalloprotease Semp1 (PubMed:22253601, PubMed:24514904). Also required for a number of female post-mating responses independent of Semp1 including egg laying and sperm usage (PubMed:22253601).</text>
</comment>
<comment type="subcellular location">
    <subcellularLocation>
        <location evidence="4">Secreted</location>
    </subcellularLocation>
    <text evidence="4">Secreted into seminal fluid.</text>
</comment>
<comment type="tissue specificity">
    <text evidence="4">Produced in the male accessory glands and secreted into seminal fluid.</text>
</comment>
<comment type="PTM">
    <text evidence="4">Undergoes cleavage in the male during mating with a cleaved product detected in the ejaculatory duct and/or bulb of males by 8-10 minutes after the start of mating. Further cleavage occurs in the mated female.</text>
</comment>
<comment type="disruption phenotype">
    <text evidence="4 5">RNAi-mediated knockdown in males results in a number of effects in females mated with these males including impaired processing of the metalloprotease Semp1 and the accessory gland proteins Acp26Aa and Acp36DE, lower levels of egg laying after the first day post-mating, higher rates of sexual receptivity to subsequent males and failure to release stored sperm from the female seminal receptacle.</text>
</comment>
<comment type="similarity">
    <text evidence="1 2">Belongs to the peptidase S1 family.</text>
</comment>
<comment type="sequence caution" evidence="7">
    <conflict type="erroneous initiation">
        <sequence resource="EMBL-CDS" id="ACO34939"/>
    </conflict>
    <text>Extended N-terminus.</text>
</comment>
<protein>
    <recommendedName>
        <fullName evidence="6">Seminase</fullName>
        <ecNumber evidence="7">3.4.21.-</ecNumber>
    </recommendedName>
</protein>
<keyword id="KW-1015">Disulfide bond</keyword>
<keyword id="KW-0325">Glycoprotein</keyword>
<keyword id="KW-0378">Hydrolase</keyword>
<keyword id="KW-0645">Protease</keyword>
<keyword id="KW-1185">Reference proteome</keyword>
<keyword id="KW-0964">Secreted</keyword>
<keyword id="KW-0720">Serine protease</keyword>
<keyword id="KW-0732">Signal</keyword>
<keyword id="KW-0865">Zymogen</keyword>
<dbReference type="EC" id="3.4.21.-" evidence="7"/>
<dbReference type="EMBL" id="AE014296">
    <property type="protein sequence ID" value="AAF51660.1"/>
    <property type="molecule type" value="Genomic_DNA"/>
</dbReference>
<dbReference type="EMBL" id="BT023574">
    <property type="protein sequence ID" value="AAY84974.1"/>
    <property type="molecule type" value="mRNA"/>
</dbReference>
<dbReference type="EMBL" id="BT023586">
    <property type="protein sequence ID" value="AAY84986.1"/>
    <property type="molecule type" value="mRNA"/>
</dbReference>
<dbReference type="EMBL" id="BT023593">
    <property type="protein sequence ID" value="AAY84993.1"/>
    <property type="molecule type" value="mRNA"/>
</dbReference>
<dbReference type="EMBL" id="BT081381">
    <property type="protein sequence ID" value="ACO34939.1"/>
    <property type="status" value="ALT_INIT"/>
    <property type="molecule type" value="mRNA"/>
</dbReference>
<dbReference type="RefSeq" id="NP_649270.1">
    <property type="nucleotide sequence ID" value="NM_141013.2"/>
</dbReference>
<dbReference type="SMR" id="Q9VP95"/>
<dbReference type="FunCoup" id="Q9VP95">
    <property type="interactions" value="34"/>
</dbReference>
<dbReference type="STRING" id="7227.FBpp0077991"/>
<dbReference type="MEROPS" id="S01.A29"/>
<dbReference type="GlyCosmos" id="Q9VP95">
    <property type="glycosylation" value="1 site, No reported glycans"/>
</dbReference>
<dbReference type="GlyGen" id="Q9VP95">
    <property type="glycosylation" value="1 site"/>
</dbReference>
<dbReference type="PaxDb" id="7227-FBpp0077991"/>
<dbReference type="DNASU" id="40315"/>
<dbReference type="EnsemblMetazoa" id="FBtr0078335">
    <property type="protein sequence ID" value="FBpp0077991"/>
    <property type="gene ID" value="FBgn0037036"/>
</dbReference>
<dbReference type="GeneID" id="40315"/>
<dbReference type="KEGG" id="dme:Dmel_CG10586"/>
<dbReference type="UCSC" id="CG10586-RA">
    <property type="organism name" value="d. melanogaster"/>
</dbReference>
<dbReference type="AGR" id="FB:FBgn0037036"/>
<dbReference type="CTD" id="40315"/>
<dbReference type="FlyBase" id="FBgn0037036">
    <property type="gene designation" value="Sems"/>
</dbReference>
<dbReference type="VEuPathDB" id="VectorBase:FBgn0037036"/>
<dbReference type="eggNOG" id="KOG3627">
    <property type="taxonomic scope" value="Eukaryota"/>
</dbReference>
<dbReference type="GeneTree" id="ENSGT00940000162823"/>
<dbReference type="HOGENOM" id="CLU_006842_7_1_1"/>
<dbReference type="InParanoid" id="Q9VP95"/>
<dbReference type="OMA" id="DEGPGHM"/>
<dbReference type="OrthoDB" id="10059102at2759"/>
<dbReference type="PhylomeDB" id="Q9VP95"/>
<dbReference type="BioGRID-ORCS" id="40315">
    <property type="hits" value="0 hits in 1 CRISPR screen"/>
</dbReference>
<dbReference type="GenomeRNAi" id="40315"/>
<dbReference type="PRO" id="PR:Q9VP95"/>
<dbReference type="Proteomes" id="UP000000803">
    <property type="component" value="Chromosome 3L"/>
</dbReference>
<dbReference type="Bgee" id="FBgn0037036">
    <property type="expression patterns" value="Expressed in spermatid in male reproductive gland and 13 other cell types or tissues"/>
</dbReference>
<dbReference type="GO" id="GO:0005615">
    <property type="term" value="C:extracellular space"/>
    <property type="evidence" value="ECO:0007005"/>
    <property type="project" value="FlyBase"/>
</dbReference>
<dbReference type="GO" id="GO:0017171">
    <property type="term" value="F:serine hydrolase activity"/>
    <property type="evidence" value="ECO:0007005"/>
    <property type="project" value="FlyBase"/>
</dbReference>
<dbReference type="GO" id="GO:0004252">
    <property type="term" value="F:serine-type endopeptidase activity"/>
    <property type="evidence" value="ECO:0000255"/>
    <property type="project" value="FlyBase"/>
</dbReference>
<dbReference type="GO" id="GO:0045434">
    <property type="term" value="P:negative regulation of female receptivity, post-mating"/>
    <property type="evidence" value="ECO:0000315"/>
    <property type="project" value="FlyBase"/>
</dbReference>
<dbReference type="GO" id="GO:0006508">
    <property type="term" value="P:proteolysis"/>
    <property type="evidence" value="ECO:0000255"/>
    <property type="project" value="FlyBase"/>
</dbReference>
<dbReference type="GO" id="GO:0019953">
    <property type="term" value="P:sexual reproduction"/>
    <property type="evidence" value="ECO:0007007"/>
    <property type="project" value="FlyBase"/>
</dbReference>
<dbReference type="GO" id="GO:0046693">
    <property type="term" value="P:sperm storage"/>
    <property type="evidence" value="ECO:0000315"/>
    <property type="project" value="FlyBase"/>
</dbReference>
<dbReference type="GO" id="GO:0031638">
    <property type="term" value="P:zymogen activation"/>
    <property type="evidence" value="ECO:0000315"/>
    <property type="project" value="FlyBase"/>
</dbReference>
<dbReference type="CDD" id="cd00190">
    <property type="entry name" value="Tryp_SPc"/>
    <property type="match status" value="1"/>
</dbReference>
<dbReference type="FunFam" id="2.40.10.10:FF:000034">
    <property type="entry name" value="Eupolytin"/>
    <property type="match status" value="1"/>
</dbReference>
<dbReference type="Gene3D" id="2.40.10.10">
    <property type="entry name" value="Trypsin-like serine proteases"/>
    <property type="match status" value="1"/>
</dbReference>
<dbReference type="InterPro" id="IPR050430">
    <property type="entry name" value="Peptidase_S1"/>
</dbReference>
<dbReference type="InterPro" id="IPR009003">
    <property type="entry name" value="Peptidase_S1_PA"/>
</dbReference>
<dbReference type="InterPro" id="IPR043504">
    <property type="entry name" value="Peptidase_S1_PA_chymotrypsin"/>
</dbReference>
<dbReference type="InterPro" id="IPR001314">
    <property type="entry name" value="Peptidase_S1A"/>
</dbReference>
<dbReference type="InterPro" id="IPR001254">
    <property type="entry name" value="Trypsin_dom"/>
</dbReference>
<dbReference type="InterPro" id="IPR018114">
    <property type="entry name" value="TRYPSIN_HIS"/>
</dbReference>
<dbReference type="PANTHER" id="PTHR24276:SF94">
    <property type="entry name" value="AT20289P-RELATED"/>
    <property type="match status" value="1"/>
</dbReference>
<dbReference type="PANTHER" id="PTHR24276">
    <property type="entry name" value="POLYSERASE-RELATED"/>
    <property type="match status" value="1"/>
</dbReference>
<dbReference type="Pfam" id="PF00089">
    <property type="entry name" value="Trypsin"/>
    <property type="match status" value="1"/>
</dbReference>
<dbReference type="PRINTS" id="PR00722">
    <property type="entry name" value="CHYMOTRYPSIN"/>
</dbReference>
<dbReference type="SMART" id="SM00020">
    <property type="entry name" value="Tryp_SPc"/>
    <property type="match status" value="1"/>
</dbReference>
<dbReference type="SUPFAM" id="SSF50494">
    <property type="entry name" value="Trypsin-like serine proteases"/>
    <property type="match status" value="1"/>
</dbReference>
<dbReference type="PROSITE" id="PS50240">
    <property type="entry name" value="TRYPSIN_DOM"/>
    <property type="match status" value="1"/>
</dbReference>
<dbReference type="PROSITE" id="PS00134">
    <property type="entry name" value="TRYPSIN_HIS"/>
    <property type="match status" value="1"/>
</dbReference>
<accession>Q9VP95</accession>
<accession>C1C3F2</accession>
<accession>Q4QQ23</accession>
<accession>Q4QQ30</accession>